<gene>
    <name evidence="4" type="primary">mspA</name>
    <name evidence="6" type="ordered locus">SAOUHSC_02524</name>
</gene>
<comment type="function">
    <text evidence="2">Plays a role in toxin production, resistance to host innate immune mechanisms, and iron homeostasis.</text>
</comment>
<comment type="subcellular location">
    <subcellularLocation>
        <location evidence="1">Membrane</location>
        <topology evidence="1">Multi-pass membrane protein</topology>
    </subcellularLocation>
</comment>
<comment type="disruption phenotype">
    <text evidence="2">Decreases cytolytic toxin production, including alpha-hemolysin Hla and phenol-soluble modulin (PSM) toxins, perhaps as a result of repression or lack of activation of the major regulator of toxin expression, the accessory gene regulatory (Agr) quorum sensing system (PubMed:32571989). Reduces abundance of staphyloxanthin in bacterial membranes (PubMed:32571989). Significantly more sensitive to treatment with detergent, sodium dodecyl sulfate (SDS) and more susceptible to penetration by the DNA-staining dye propidium iodide (PubMed:32571989). Abnormally high levels of intracellular iron due, at least in part, to impaired activity of the heme efflux system Hrt (PubMed:32571989). Reduces both abscess lesion area and tissue bacterial burden in BALB/c strain mouse subcutaneous infection model (PubMed:32571989). Significantly lower level of systemic bacterial burden in C57BL/6J strain mouse sepsis model (PubMed:32571989). Increases susceptibility to components of human innate immune system, and reduces survival inside macrophage-like PMA-treated THP-1 cells, in vitro; shown using USA300/JE2 or SH1000 strains (PubMed:32571989). Reduces ability to lyse human red blood cells or cultured human-derived cells, in vitro; shown using USA300/JE2 or SH1000 strains (PubMed:32571989).</text>
</comment>
<comment type="similarity">
    <text evidence="5">Belongs to the MspA family.</text>
</comment>
<dbReference type="EMBL" id="CP000253">
    <property type="protein sequence ID" value="ABD31540.1"/>
    <property type="molecule type" value="Genomic_DNA"/>
</dbReference>
<dbReference type="RefSeq" id="WP_001161085.1">
    <property type="nucleotide sequence ID" value="NZ_LS483365.1"/>
</dbReference>
<dbReference type="RefSeq" id="YP_500989.1">
    <property type="nucleotide sequence ID" value="NC_007795.1"/>
</dbReference>
<dbReference type="SMR" id="Q2FVZ6"/>
<dbReference type="STRING" id="93061.SAOUHSC_02524"/>
<dbReference type="PaxDb" id="1280-SAXN108_2509"/>
<dbReference type="GeneID" id="3921115"/>
<dbReference type="GeneID" id="66840471"/>
<dbReference type="KEGG" id="sao:SAOUHSC_02524"/>
<dbReference type="PATRIC" id="fig|93061.5.peg.2277"/>
<dbReference type="eggNOG" id="ENOG503058V">
    <property type="taxonomic scope" value="Bacteria"/>
</dbReference>
<dbReference type="HOGENOM" id="CLU_177067_0_0_9"/>
<dbReference type="OrthoDB" id="2414487at2"/>
<dbReference type="Proteomes" id="UP000008816">
    <property type="component" value="Chromosome"/>
</dbReference>
<dbReference type="GO" id="GO:0016020">
    <property type="term" value="C:membrane"/>
    <property type="evidence" value="ECO:0007669"/>
    <property type="project" value="UniProtKB-SubCell"/>
</dbReference>
<dbReference type="InterPro" id="IPR053572">
    <property type="entry name" value="MspA"/>
</dbReference>
<dbReference type="NCBIfam" id="NF038247">
    <property type="entry name" value="memb_stab_MspA"/>
    <property type="match status" value="1"/>
</dbReference>
<evidence type="ECO:0000255" key="1"/>
<evidence type="ECO:0000269" key="2">
    <source>
    </source>
</evidence>
<evidence type="ECO:0000303" key="3">
    <source>
    </source>
</evidence>
<evidence type="ECO:0000303" key="4">
    <source ref="1"/>
</evidence>
<evidence type="ECO:0000305" key="5"/>
<evidence type="ECO:0000312" key="6">
    <source>
        <dbReference type="EMBL" id="ABD31540.1"/>
    </source>
</evidence>
<evidence type="ECO:0000312" key="7">
    <source>
        <dbReference type="Proteomes" id="UP000008816"/>
    </source>
</evidence>
<reference evidence="7" key="1">
    <citation type="book" date="2006" name="Gram positive pathogens, 2nd edition">
        <title>The Staphylococcus aureus NCTC 8325 genome.</title>
        <editorList>
            <person name="Fischetti V."/>
            <person name="Novick R."/>
            <person name="Ferretti J."/>
            <person name="Portnoy D."/>
            <person name="Rood J."/>
        </editorList>
        <authorList>
            <person name="Gillaspy A.F."/>
            <person name="Worrell V."/>
            <person name="Orvis J."/>
            <person name="Roe B.A."/>
            <person name="Dyer D.W."/>
            <person name="Iandolo J.J."/>
        </authorList>
    </citation>
    <scope>NUCLEOTIDE SEQUENCE [LARGE SCALE GENOMIC DNA]</scope>
    <source>
        <strain evidence="7">NCTC 8325 / PS 47</strain>
    </source>
</reference>
<reference evidence="5" key="2">
    <citation type="journal article" date="2020" name="Infect. Immun.">
        <title>A Small Membrane Stabilizing Protein Critical to the Pathogenicity of Staphylococcus aureus.</title>
        <authorList>
            <person name="Duggan S."/>
            <person name="Laabei M."/>
            <person name="Alnahari A.A."/>
            <person name="O'Brien E.C."/>
            <person name="Lacey K.A."/>
            <person name="Bacon L."/>
            <person name="Heesom K."/>
            <person name="Fu C.L."/>
            <person name="Otto M."/>
            <person name="Skaar E."/>
            <person name="McLoughlin R.M."/>
            <person name="Massey R.C."/>
        </authorList>
    </citation>
    <scope>FUNCTION</scope>
    <scope>SUBCELLULAR LOCATION</scope>
    <scope>DISRUPTION PHENOTYPE</scope>
    <source>
        <strain evidence="3">SH1000</strain>
        <strain evidence="3">USA300</strain>
    </source>
</reference>
<keyword id="KW-0472">Membrane</keyword>
<keyword id="KW-1185">Reference proteome</keyword>
<keyword id="KW-0812">Transmembrane</keyword>
<keyword id="KW-1133">Transmembrane helix</keyword>
<accession>Q2FVZ6</accession>
<protein>
    <recommendedName>
        <fullName evidence="4">Membrane-stabilizing protein A</fullName>
    </recommendedName>
</protein>
<name>MSPA_STAA8</name>
<proteinExistence type="inferred from homology"/>
<sequence length="105" mass="12285">MQFYLILLAILYLIVSFISIFKMEVVFTRILRIIMGVLLLFVLALTTMSFPKENWWVFIVLLLLVGNVEVTGFKMLKKDLKGVNILNLMSLFIFVIYFILTIVLF</sequence>
<organism evidence="7">
    <name type="scientific">Staphylococcus aureus (strain NCTC 8325 / PS 47)</name>
    <dbReference type="NCBI Taxonomy" id="93061"/>
    <lineage>
        <taxon>Bacteria</taxon>
        <taxon>Bacillati</taxon>
        <taxon>Bacillota</taxon>
        <taxon>Bacilli</taxon>
        <taxon>Bacillales</taxon>
        <taxon>Staphylococcaceae</taxon>
        <taxon>Staphylococcus</taxon>
    </lineage>
</organism>
<feature type="chain" id="PRO_0000459080" description="Membrane-stabilizing protein A">
    <location>
        <begin position="1"/>
        <end position="105"/>
    </location>
</feature>
<feature type="transmembrane region" description="Helical" evidence="1">
    <location>
        <begin position="1"/>
        <end position="21"/>
    </location>
</feature>
<feature type="topological domain" description="Cytoplasmic" evidence="5">
    <location>
        <begin position="22"/>
        <end position="29"/>
    </location>
</feature>
<feature type="transmembrane region" description="Helical" evidence="1">
    <location>
        <begin position="30"/>
        <end position="50"/>
    </location>
</feature>
<feature type="topological domain" description="Extracellular" evidence="5">
    <location>
        <begin position="51"/>
        <end position="55"/>
    </location>
</feature>
<feature type="transmembrane region" description="Helical" evidence="1">
    <location>
        <begin position="56"/>
        <end position="76"/>
    </location>
</feature>
<feature type="topological domain" description="Cytoplasmic" evidence="5">
    <location>
        <begin position="77"/>
        <end position="84"/>
    </location>
</feature>
<feature type="transmembrane region" description="Helical" evidence="1">
    <location>
        <begin position="85"/>
        <end position="105"/>
    </location>
</feature>